<comment type="function">
    <text evidence="1">The RuvA-RuvB-RuvC complex processes Holliday junction (HJ) DNA during genetic recombination and DNA repair. Endonuclease that resolves HJ intermediates. Cleaves cruciform DNA by making single-stranded nicks across the HJ at symmetrical positions within the homologous arms, yielding a 5'-phosphate and a 3'-hydroxyl group; requires a central core of homology in the junction. The consensus cleavage sequence is 5'-(A/T)TT(C/G)-3'. Cleavage occurs on the 3'-side of the TT dinucleotide at the point of strand exchange. HJ branch migration catalyzed by RuvA-RuvB allows RuvC to scan DNA until it finds its consensus sequence, where it cleaves and resolves the cruciform DNA.</text>
</comment>
<comment type="catalytic activity">
    <reaction evidence="1">
        <text>Endonucleolytic cleavage at a junction such as a reciprocal single-stranded crossover between two homologous DNA duplexes (Holliday junction).</text>
        <dbReference type="EC" id="3.1.21.10"/>
    </reaction>
</comment>
<comment type="cofactor">
    <cofactor evidence="1">
        <name>Mg(2+)</name>
        <dbReference type="ChEBI" id="CHEBI:18420"/>
    </cofactor>
    <text evidence="1">Binds 2 Mg(2+) ion per subunit.</text>
</comment>
<comment type="subunit">
    <text evidence="1">Homodimer which binds Holliday junction (HJ) DNA. The HJ becomes 2-fold symmetrical on binding to RuvC with unstacked arms; it has a different conformation from HJ DNA in complex with RuvA. In the full resolvosome a probable DNA-RuvA(4)-RuvB(12)-RuvC(2) complex forms which resolves the HJ.</text>
</comment>
<comment type="subcellular location">
    <subcellularLocation>
        <location evidence="1">Cytoplasm</location>
    </subcellularLocation>
</comment>
<comment type="similarity">
    <text evidence="1">Belongs to the RuvC family.</text>
</comment>
<evidence type="ECO:0000255" key="1">
    <source>
        <dbReference type="HAMAP-Rule" id="MF_00034"/>
    </source>
</evidence>
<accession>Q9KR00</accession>
<proteinExistence type="inferred from homology"/>
<gene>
    <name evidence="1" type="primary">ruvC</name>
    <name type="ordered locus">VC_1847</name>
</gene>
<protein>
    <recommendedName>
        <fullName evidence="1">Crossover junction endodeoxyribonuclease RuvC</fullName>
        <ecNumber evidence="1">3.1.21.10</ecNumber>
    </recommendedName>
    <alternativeName>
        <fullName evidence="1">Holliday junction nuclease RuvC</fullName>
    </alternativeName>
    <alternativeName>
        <fullName evidence="1">Holliday junction resolvase RuvC</fullName>
    </alternativeName>
</protein>
<reference key="1">
    <citation type="journal article" date="2000" name="Nature">
        <title>DNA sequence of both chromosomes of the cholera pathogen Vibrio cholerae.</title>
        <authorList>
            <person name="Heidelberg J.F."/>
            <person name="Eisen J.A."/>
            <person name="Nelson W.C."/>
            <person name="Clayton R.A."/>
            <person name="Gwinn M.L."/>
            <person name="Dodson R.J."/>
            <person name="Haft D.H."/>
            <person name="Hickey E.K."/>
            <person name="Peterson J.D."/>
            <person name="Umayam L.A."/>
            <person name="Gill S.R."/>
            <person name="Nelson K.E."/>
            <person name="Read T.D."/>
            <person name="Tettelin H."/>
            <person name="Richardson D.L."/>
            <person name="Ermolaeva M.D."/>
            <person name="Vamathevan J.J."/>
            <person name="Bass S."/>
            <person name="Qin H."/>
            <person name="Dragoi I."/>
            <person name="Sellers P."/>
            <person name="McDonald L.A."/>
            <person name="Utterback T.R."/>
            <person name="Fleischmann R.D."/>
            <person name="Nierman W.C."/>
            <person name="White O."/>
            <person name="Salzberg S.L."/>
            <person name="Smith H.O."/>
            <person name="Colwell R.R."/>
            <person name="Mekalanos J.J."/>
            <person name="Venter J.C."/>
            <person name="Fraser C.M."/>
        </authorList>
    </citation>
    <scope>NUCLEOTIDE SEQUENCE [LARGE SCALE GENOMIC DNA]</scope>
    <source>
        <strain>ATCC 39315 / El Tor Inaba N16961</strain>
    </source>
</reference>
<organism>
    <name type="scientific">Vibrio cholerae serotype O1 (strain ATCC 39315 / El Tor Inaba N16961)</name>
    <dbReference type="NCBI Taxonomy" id="243277"/>
    <lineage>
        <taxon>Bacteria</taxon>
        <taxon>Pseudomonadati</taxon>
        <taxon>Pseudomonadota</taxon>
        <taxon>Gammaproteobacteria</taxon>
        <taxon>Vibrionales</taxon>
        <taxon>Vibrionaceae</taxon>
        <taxon>Vibrio</taxon>
    </lineage>
</organism>
<name>RUVC_VIBCH</name>
<keyword id="KW-0963">Cytoplasm</keyword>
<keyword id="KW-0227">DNA damage</keyword>
<keyword id="KW-0233">DNA recombination</keyword>
<keyword id="KW-0234">DNA repair</keyword>
<keyword id="KW-0238">DNA-binding</keyword>
<keyword id="KW-0255">Endonuclease</keyword>
<keyword id="KW-0378">Hydrolase</keyword>
<keyword id="KW-0460">Magnesium</keyword>
<keyword id="KW-0479">Metal-binding</keyword>
<keyword id="KW-0540">Nuclease</keyword>
<keyword id="KW-1185">Reference proteome</keyword>
<dbReference type="EC" id="3.1.21.10" evidence="1"/>
<dbReference type="EMBL" id="AE003852">
    <property type="protein sequence ID" value="AAF94995.1"/>
    <property type="molecule type" value="Genomic_DNA"/>
</dbReference>
<dbReference type="PIR" id="H82149">
    <property type="entry name" value="H82149"/>
</dbReference>
<dbReference type="RefSeq" id="NP_231481.1">
    <property type="nucleotide sequence ID" value="NC_002505.1"/>
</dbReference>
<dbReference type="RefSeq" id="WP_000111361.1">
    <property type="nucleotide sequence ID" value="NZ_LT906614.1"/>
</dbReference>
<dbReference type="SMR" id="Q9KR00"/>
<dbReference type="STRING" id="243277.VC_1847"/>
<dbReference type="DNASU" id="2613601"/>
<dbReference type="EnsemblBacteria" id="AAF94995">
    <property type="protein sequence ID" value="AAF94995"/>
    <property type="gene ID" value="VC_1847"/>
</dbReference>
<dbReference type="KEGG" id="vch:VC_1847"/>
<dbReference type="PATRIC" id="fig|243277.26.peg.1763"/>
<dbReference type="eggNOG" id="COG0817">
    <property type="taxonomic scope" value="Bacteria"/>
</dbReference>
<dbReference type="HOGENOM" id="CLU_091257_2_1_6"/>
<dbReference type="Proteomes" id="UP000000584">
    <property type="component" value="Chromosome 1"/>
</dbReference>
<dbReference type="GO" id="GO:0005737">
    <property type="term" value="C:cytoplasm"/>
    <property type="evidence" value="ECO:0007669"/>
    <property type="project" value="UniProtKB-SubCell"/>
</dbReference>
<dbReference type="GO" id="GO:0048476">
    <property type="term" value="C:Holliday junction resolvase complex"/>
    <property type="evidence" value="ECO:0007669"/>
    <property type="project" value="UniProtKB-UniRule"/>
</dbReference>
<dbReference type="GO" id="GO:0008821">
    <property type="term" value="F:crossover junction DNA endonuclease activity"/>
    <property type="evidence" value="ECO:0007669"/>
    <property type="project" value="UniProtKB-UniRule"/>
</dbReference>
<dbReference type="GO" id="GO:0003677">
    <property type="term" value="F:DNA binding"/>
    <property type="evidence" value="ECO:0007669"/>
    <property type="project" value="UniProtKB-KW"/>
</dbReference>
<dbReference type="GO" id="GO:0000287">
    <property type="term" value="F:magnesium ion binding"/>
    <property type="evidence" value="ECO:0007669"/>
    <property type="project" value="UniProtKB-UniRule"/>
</dbReference>
<dbReference type="GO" id="GO:0006310">
    <property type="term" value="P:DNA recombination"/>
    <property type="evidence" value="ECO:0007669"/>
    <property type="project" value="UniProtKB-UniRule"/>
</dbReference>
<dbReference type="GO" id="GO:0006281">
    <property type="term" value="P:DNA repair"/>
    <property type="evidence" value="ECO:0007669"/>
    <property type="project" value="UniProtKB-UniRule"/>
</dbReference>
<dbReference type="CDD" id="cd16962">
    <property type="entry name" value="RuvC"/>
    <property type="match status" value="1"/>
</dbReference>
<dbReference type="FunFam" id="3.30.420.10:FF:000002">
    <property type="entry name" value="Crossover junction endodeoxyribonuclease RuvC"/>
    <property type="match status" value="1"/>
</dbReference>
<dbReference type="Gene3D" id="3.30.420.10">
    <property type="entry name" value="Ribonuclease H-like superfamily/Ribonuclease H"/>
    <property type="match status" value="1"/>
</dbReference>
<dbReference type="HAMAP" id="MF_00034">
    <property type="entry name" value="RuvC"/>
    <property type="match status" value="1"/>
</dbReference>
<dbReference type="InterPro" id="IPR012337">
    <property type="entry name" value="RNaseH-like_sf"/>
</dbReference>
<dbReference type="InterPro" id="IPR036397">
    <property type="entry name" value="RNaseH_sf"/>
</dbReference>
<dbReference type="InterPro" id="IPR020563">
    <property type="entry name" value="X-over_junc_endoDNase_Mg_BS"/>
</dbReference>
<dbReference type="InterPro" id="IPR002176">
    <property type="entry name" value="X-over_junc_endoDNase_RuvC"/>
</dbReference>
<dbReference type="NCBIfam" id="TIGR00228">
    <property type="entry name" value="ruvC"/>
    <property type="match status" value="1"/>
</dbReference>
<dbReference type="PANTHER" id="PTHR30194">
    <property type="entry name" value="CROSSOVER JUNCTION ENDODEOXYRIBONUCLEASE RUVC"/>
    <property type="match status" value="1"/>
</dbReference>
<dbReference type="PANTHER" id="PTHR30194:SF3">
    <property type="entry name" value="CROSSOVER JUNCTION ENDODEOXYRIBONUCLEASE RUVC"/>
    <property type="match status" value="1"/>
</dbReference>
<dbReference type="Pfam" id="PF02075">
    <property type="entry name" value="RuvC"/>
    <property type="match status" value="1"/>
</dbReference>
<dbReference type="PRINTS" id="PR00696">
    <property type="entry name" value="RSOLVASERUVC"/>
</dbReference>
<dbReference type="SUPFAM" id="SSF53098">
    <property type="entry name" value="Ribonuclease H-like"/>
    <property type="match status" value="1"/>
</dbReference>
<dbReference type="PROSITE" id="PS01321">
    <property type="entry name" value="RUVC"/>
    <property type="match status" value="1"/>
</dbReference>
<sequence>MSVILGIDPGSRVTGYGVIRQQGRHLIYLGSGCIRTSDLELPLRLKQIYAGVSEIITQFQPDAFAIEQVFMAKNADSALKLGQARGSAIVAAVNAELPVYEYAARLIKQAVVGTGAADKSQVQHMVQQMLKLPGKPQADAADALGVAICHANTNKTLIALAGQATSARRGRYR</sequence>
<feature type="chain" id="PRO_0000183142" description="Crossover junction endodeoxyribonuclease RuvC">
    <location>
        <begin position="1"/>
        <end position="173"/>
    </location>
</feature>
<feature type="active site" evidence="1">
    <location>
        <position position="8"/>
    </location>
</feature>
<feature type="active site" evidence="1">
    <location>
        <position position="67"/>
    </location>
</feature>
<feature type="active site" evidence="1">
    <location>
        <position position="139"/>
    </location>
</feature>
<feature type="binding site" evidence="1">
    <location>
        <position position="8"/>
    </location>
    <ligand>
        <name>Mg(2+)</name>
        <dbReference type="ChEBI" id="CHEBI:18420"/>
        <label>1</label>
    </ligand>
</feature>
<feature type="binding site" evidence="1">
    <location>
        <position position="67"/>
    </location>
    <ligand>
        <name>Mg(2+)</name>
        <dbReference type="ChEBI" id="CHEBI:18420"/>
        <label>2</label>
    </ligand>
</feature>
<feature type="binding site" evidence="1">
    <location>
        <position position="139"/>
    </location>
    <ligand>
        <name>Mg(2+)</name>
        <dbReference type="ChEBI" id="CHEBI:18420"/>
        <label>1</label>
    </ligand>
</feature>